<feature type="chain" id="PRO_0000281414" description="Type IV secretion system protein virB10">
    <location>
        <begin position="1"/>
        <end position="385"/>
    </location>
</feature>
<feature type="transmembrane region" description="Helical" evidence="2">
    <location>
        <begin position="31"/>
        <end position="51"/>
    </location>
</feature>
<feature type="region of interest" description="Disordered" evidence="3">
    <location>
        <begin position="1"/>
        <end position="23"/>
    </location>
</feature>
<feature type="region of interest" description="Disordered" evidence="3">
    <location>
        <begin position="123"/>
        <end position="145"/>
    </location>
</feature>
<feature type="compositionally biased region" description="Polar residues" evidence="3">
    <location>
        <begin position="125"/>
        <end position="142"/>
    </location>
</feature>
<organism>
    <name type="scientific">Bartonella quintana (strain Toulouse)</name>
    <name type="common">Rochalimaea quintana</name>
    <dbReference type="NCBI Taxonomy" id="283165"/>
    <lineage>
        <taxon>Bacteria</taxon>
        <taxon>Pseudomonadati</taxon>
        <taxon>Pseudomonadota</taxon>
        <taxon>Alphaproteobacteria</taxon>
        <taxon>Hyphomicrobiales</taxon>
        <taxon>Bartonellaceae</taxon>
        <taxon>Bartonella</taxon>
    </lineage>
</organism>
<reference key="1">
    <citation type="submission" date="2002-06" db="EMBL/GenBank/DDBJ databases">
        <title>Evolution of type IV secretion systems in Bartonella: horizontal transmission and gene conversion.</title>
        <authorList>
            <person name="Alsmark U.C.M."/>
            <person name="Frank A.C."/>
            <person name="Thollesson M."/>
            <person name="Andersson S.G.E."/>
        </authorList>
    </citation>
    <scope>NUCLEOTIDE SEQUENCE [GENOMIC DNA]</scope>
    <source>
        <strain>Toulouse</strain>
    </source>
</reference>
<reference key="2">
    <citation type="journal article" date="2004" name="Proc. Natl. Acad. Sci. U.S.A.">
        <title>The louse-borne human pathogen Bartonella quintana is a genomic derivative of the zoonotic agent Bartonella henselae.</title>
        <authorList>
            <person name="Alsmark U.C.M."/>
            <person name="Frank A.C."/>
            <person name="Karlberg E.O."/>
            <person name="Legault B.-A."/>
            <person name="Ardell D.H."/>
            <person name="Canbaeck B."/>
            <person name="Eriksson A.-S."/>
            <person name="Naeslund A.K."/>
            <person name="Handley S.A."/>
            <person name="Huvet M."/>
            <person name="La Scola B."/>
            <person name="Holmberg M."/>
            <person name="Andersson S.G.E."/>
        </authorList>
    </citation>
    <scope>NUCLEOTIDE SEQUENCE [LARGE SCALE GENOMIC DNA]</scope>
    <scope>POSSIBLE FUNCTION</scope>
    <source>
        <strain>Toulouse</strain>
    </source>
</reference>
<sequence>MKDEIDENNINDRSTIKDGQGKKLHSNTSKAVALLVLLGVCGYLAYSTLITNKKQPVELPKEAIIKQTERFRPAQPKPVLLEPTEKNNLLLPKVELPTPKRNQTNADDSLLEAAQRAPVLAYASPQKSQANAEKNNDTSPNQLERKPDETAQRFNHLLKPTNLEGIHASTLTNRNYIIAMGASIPCILETAISSDQQGFTSCIVSRDILSDNGRVVLLDKGTQIVGEYRSGLKKGQNRLFVLWNRAKTPSGVIITLASPATDALGRSGVDGDVDNHWFERIGSALLVSIVRDATNYARNRLPKDQDKNSSDTISSGPNIANIVVENYANIPPTLTKNQGEMVNVFVARDLDFSSVYKLKVIEDKKQIVNRSISRNFYKNSAVILK</sequence>
<name>VIRBA_BARQU</name>
<protein>
    <recommendedName>
        <fullName>Type IV secretion system protein virB10</fullName>
    </recommendedName>
</protein>
<proteinExistence type="inferred from homology"/>
<gene>
    <name type="primary">virB10</name>
    <name type="ordered locus">BQ10610</name>
</gene>
<dbReference type="EMBL" id="AY122055">
    <property type="protein sequence ID" value="AAM82243.1"/>
    <property type="status" value="ALT_INIT"/>
    <property type="molecule type" value="Genomic_DNA"/>
</dbReference>
<dbReference type="EMBL" id="BX897700">
    <property type="protein sequence ID" value="CAF26528.1"/>
    <property type="molecule type" value="Genomic_DNA"/>
</dbReference>
<dbReference type="RefSeq" id="WP_011179732.1">
    <property type="nucleotide sequence ID" value="NC_005955.1"/>
</dbReference>
<dbReference type="SMR" id="Q6FYW1"/>
<dbReference type="KEGG" id="bqu:BQ10610"/>
<dbReference type="eggNOG" id="COG2948">
    <property type="taxonomic scope" value="Bacteria"/>
</dbReference>
<dbReference type="HOGENOM" id="CLU_041899_1_0_5"/>
<dbReference type="OrthoDB" id="9807354at2"/>
<dbReference type="Proteomes" id="UP000000597">
    <property type="component" value="Chromosome"/>
</dbReference>
<dbReference type="GO" id="GO:0005886">
    <property type="term" value="C:plasma membrane"/>
    <property type="evidence" value="ECO:0007669"/>
    <property type="project" value="UniProtKB-SubCell"/>
</dbReference>
<dbReference type="CDD" id="cd16429">
    <property type="entry name" value="VirB10"/>
    <property type="match status" value="1"/>
</dbReference>
<dbReference type="Gene3D" id="2.40.128.260">
    <property type="entry name" value="Type IV secretion system, VirB10/TraB/TrbI"/>
    <property type="match status" value="2"/>
</dbReference>
<dbReference type="InterPro" id="IPR047695">
    <property type="entry name" value="T4SS_VirB10/PtlG"/>
</dbReference>
<dbReference type="InterPro" id="IPR005498">
    <property type="entry name" value="T4SS_VirB10/TraB/TrbI"/>
</dbReference>
<dbReference type="InterPro" id="IPR042217">
    <property type="entry name" value="T4SS_VirB10/TrbI"/>
</dbReference>
<dbReference type="NCBIfam" id="NF038091">
    <property type="entry name" value="T4SS_VirB10"/>
    <property type="match status" value="1"/>
</dbReference>
<dbReference type="Pfam" id="PF03743">
    <property type="entry name" value="TrbI"/>
    <property type="match status" value="1"/>
</dbReference>
<keyword id="KW-0997">Cell inner membrane</keyword>
<keyword id="KW-1003">Cell membrane</keyword>
<keyword id="KW-0472">Membrane</keyword>
<keyword id="KW-0812">Transmembrane</keyword>
<keyword id="KW-1133">Transmembrane helix</keyword>
<keyword id="KW-0813">Transport</keyword>
<keyword id="KW-0843">Virulence</keyword>
<comment type="function">
    <text>Component of the type IV secretion system VirB/VirD4 which could be a major virulence determinant for subversion of human endothelial cell (HEC) function.</text>
</comment>
<comment type="subunit">
    <text evidence="1">Interacts with virB4, virB8 and virB9.</text>
</comment>
<comment type="subcellular location">
    <subcellularLocation>
        <location evidence="4">Cell inner membrane</location>
        <topology evidence="4">Single-pass membrane protein</topology>
    </subcellularLocation>
</comment>
<comment type="similarity">
    <text evidence="4">Belongs to the TrbI/VirB10 family.</text>
</comment>
<comment type="sequence caution" evidence="4">
    <conflict type="erroneous initiation">
        <sequence resource="EMBL-CDS" id="AAM82243"/>
    </conflict>
</comment>
<accession>Q6FYW1</accession>
<accession>Q4L2Q3</accession>
<evidence type="ECO:0000250" key="1"/>
<evidence type="ECO:0000255" key="2"/>
<evidence type="ECO:0000256" key="3">
    <source>
        <dbReference type="SAM" id="MobiDB-lite"/>
    </source>
</evidence>
<evidence type="ECO:0000305" key="4"/>